<evidence type="ECO:0000255" key="1">
    <source>
        <dbReference type="HAMAP-Rule" id="MF_01368"/>
    </source>
</evidence>
<evidence type="ECO:0000305" key="2"/>
<dbReference type="EMBL" id="CP001022">
    <property type="protein sequence ID" value="ACB59611.1"/>
    <property type="molecule type" value="Genomic_DNA"/>
</dbReference>
<dbReference type="RefSeq" id="WP_012369036.1">
    <property type="nucleotide sequence ID" value="NC_010556.1"/>
</dbReference>
<dbReference type="SMR" id="B1YGX8"/>
<dbReference type="STRING" id="262543.Exig_0124"/>
<dbReference type="KEGG" id="esi:Exig_0124"/>
<dbReference type="eggNOG" id="COG0203">
    <property type="taxonomic scope" value="Bacteria"/>
</dbReference>
<dbReference type="HOGENOM" id="CLU_074407_2_2_9"/>
<dbReference type="OrthoDB" id="9809073at2"/>
<dbReference type="Proteomes" id="UP000001681">
    <property type="component" value="Chromosome"/>
</dbReference>
<dbReference type="GO" id="GO:0022625">
    <property type="term" value="C:cytosolic large ribosomal subunit"/>
    <property type="evidence" value="ECO:0007669"/>
    <property type="project" value="TreeGrafter"/>
</dbReference>
<dbReference type="GO" id="GO:0003735">
    <property type="term" value="F:structural constituent of ribosome"/>
    <property type="evidence" value="ECO:0007669"/>
    <property type="project" value="InterPro"/>
</dbReference>
<dbReference type="GO" id="GO:0006412">
    <property type="term" value="P:translation"/>
    <property type="evidence" value="ECO:0007669"/>
    <property type="project" value="UniProtKB-UniRule"/>
</dbReference>
<dbReference type="FunFam" id="3.90.1030.10:FF:000002">
    <property type="entry name" value="50S ribosomal protein L17"/>
    <property type="match status" value="1"/>
</dbReference>
<dbReference type="Gene3D" id="3.90.1030.10">
    <property type="entry name" value="Ribosomal protein L17"/>
    <property type="match status" value="1"/>
</dbReference>
<dbReference type="HAMAP" id="MF_01368">
    <property type="entry name" value="Ribosomal_bL17"/>
    <property type="match status" value="1"/>
</dbReference>
<dbReference type="InterPro" id="IPR000456">
    <property type="entry name" value="Ribosomal_bL17"/>
</dbReference>
<dbReference type="InterPro" id="IPR047859">
    <property type="entry name" value="Ribosomal_bL17_CS"/>
</dbReference>
<dbReference type="InterPro" id="IPR036373">
    <property type="entry name" value="Ribosomal_bL17_sf"/>
</dbReference>
<dbReference type="NCBIfam" id="TIGR00059">
    <property type="entry name" value="L17"/>
    <property type="match status" value="1"/>
</dbReference>
<dbReference type="PANTHER" id="PTHR14413:SF16">
    <property type="entry name" value="LARGE RIBOSOMAL SUBUNIT PROTEIN BL17M"/>
    <property type="match status" value="1"/>
</dbReference>
<dbReference type="PANTHER" id="PTHR14413">
    <property type="entry name" value="RIBOSOMAL PROTEIN L17"/>
    <property type="match status" value="1"/>
</dbReference>
<dbReference type="Pfam" id="PF01196">
    <property type="entry name" value="Ribosomal_L17"/>
    <property type="match status" value="1"/>
</dbReference>
<dbReference type="SUPFAM" id="SSF64263">
    <property type="entry name" value="Prokaryotic ribosomal protein L17"/>
    <property type="match status" value="1"/>
</dbReference>
<dbReference type="PROSITE" id="PS01167">
    <property type="entry name" value="RIBOSOMAL_L17"/>
    <property type="match status" value="1"/>
</dbReference>
<keyword id="KW-1185">Reference proteome</keyword>
<keyword id="KW-0687">Ribonucleoprotein</keyword>
<keyword id="KW-0689">Ribosomal protein</keyword>
<proteinExistence type="inferred from homology"/>
<protein>
    <recommendedName>
        <fullName evidence="1">Large ribosomal subunit protein bL17</fullName>
    </recommendedName>
    <alternativeName>
        <fullName evidence="2">50S ribosomal protein L17</fullName>
    </alternativeName>
</protein>
<name>RL17_EXIS2</name>
<reference key="1">
    <citation type="submission" date="2008-04" db="EMBL/GenBank/DDBJ databases">
        <title>Complete sequence of chromosome of Exiguobacterium sibiricum 255-15.</title>
        <authorList>
            <consortium name="US DOE Joint Genome Institute"/>
            <person name="Copeland A."/>
            <person name="Lucas S."/>
            <person name="Lapidus A."/>
            <person name="Glavina del Rio T."/>
            <person name="Dalin E."/>
            <person name="Tice H."/>
            <person name="Bruce D."/>
            <person name="Goodwin L."/>
            <person name="Pitluck S."/>
            <person name="Kiss H."/>
            <person name="Chertkov O."/>
            <person name="Monk C."/>
            <person name="Brettin T."/>
            <person name="Detter J.C."/>
            <person name="Han C."/>
            <person name="Kuske C.R."/>
            <person name="Schmutz J."/>
            <person name="Larimer F."/>
            <person name="Land M."/>
            <person name="Hauser L."/>
            <person name="Kyrpides N."/>
            <person name="Mikhailova N."/>
            <person name="Vishnivetskaya T."/>
            <person name="Rodrigues D.F."/>
            <person name="Gilichinsky D."/>
            <person name="Tiedje J."/>
            <person name="Richardson P."/>
        </authorList>
    </citation>
    <scope>NUCLEOTIDE SEQUENCE [LARGE SCALE GENOMIC DNA]</scope>
    <source>
        <strain>DSM 17290 / CCUG 55495 / CIP 109462 / JCM 13490 / 255-15</strain>
    </source>
</reference>
<organism>
    <name type="scientific">Exiguobacterium sibiricum (strain DSM 17290 / CCUG 55495 / CIP 109462 / JCM 13490 / 255-15)</name>
    <dbReference type="NCBI Taxonomy" id="262543"/>
    <lineage>
        <taxon>Bacteria</taxon>
        <taxon>Bacillati</taxon>
        <taxon>Bacillota</taxon>
        <taxon>Bacilli</taxon>
        <taxon>Bacillales</taxon>
        <taxon>Bacillales Family XII. Incertae Sedis</taxon>
        <taxon>Exiguobacterium</taxon>
    </lineage>
</organism>
<accession>B1YGX8</accession>
<feature type="chain" id="PRO_1000144427" description="Large ribosomal subunit protein bL17">
    <location>
        <begin position="1"/>
        <end position="123"/>
    </location>
</feature>
<comment type="subunit">
    <text evidence="1">Part of the 50S ribosomal subunit. Contacts protein L32.</text>
</comment>
<comment type="similarity">
    <text evidence="1">Belongs to the bacterial ribosomal protein bL17 family.</text>
</comment>
<sequence length="123" mass="13807">MAYSKLGRTSSQRKALLRDLATDLIINERIQTTEQKAKELRPVVEKLITLGKRGDLHARRQVASFVRREAAGQNEAGKTQDAIQKLFADVAPRFAERQGGYTRIMKMGPRRGDGAEMVIIELV</sequence>
<gene>
    <name evidence="1" type="primary">rplQ</name>
    <name type="ordered locus">Exig_0124</name>
</gene>